<accession>Q5F6W8</accession>
<sequence>MSDESPIIFTDSCCAKVADLIAEENNPDLKLRVFVNGGGCSGFQYGFTFDEIKNDDDFEIEKNGLVFLVDPMSYQYLVGAEIDYTESLQGSQFVIRNPNAETTCGCGSSFSV</sequence>
<organism>
    <name type="scientific">Neisseria gonorrhoeae (strain ATCC 700825 / FA 1090)</name>
    <dbReference type="NCBI Taxonomy" id="242231"/>
    <lineage>
        <taxon>Bacteria</taxon>
        <taxon>Pseudomonadati</taxon>
        <taxon>Pseudomonadota</taxon>
        <taxon>Betaproteobacteria</taxon>
        <taxon>Neisseriales</taxon>
        <taxon>Neisseriaceae</taxon>
        <taxon>Neisseria</taxon>
    </lineage>
</organism>
<name>ERPA_NEIG1</name>
<comment type="function">
    <text evidence="1">Required for insertion of 4Fe-4S clusters.</text>
</comment>
<comment type="cofactor">
    <cofactor evidence="1">
        <name>iron-sulfur cluster</name>
        <dbReference type="ChEBI" id="CHEBI:30408"/>
    </cofactor>
    <text evidence="1">Binds 1 iron-sulfur cluster per subunit.</text>
</comment>
<comment type="subunit">
    <text evidence="1">Homodimer.</text>
</comment>
<comment type="similarity">
    <text evidence="1">Belongs to the HesB/IscA family.</text>
</comment>
<proteinExistence type="inferred from homology"/>
<protein>
    <recommendedName>
        <fullName evidence="1">Putative iron-sulfur cluster insertion protein ErpA</fullName>
    </recommendedName>
</protein>
<reference key="1">
    <citation type="submission" date="2003-03" db="EMBL/GenBank/DDBJ databases">
        <title>The complete genome sequence of Neisseria gonorrhoeae.</title>
        <authorList>
            <person name="Lewis L.A."/>
            <person name="Gillaspy A.F."/>
            <person name="McLaughlin R.E."/>
            <person name="Gipson M."/>
            <person name="Ducey T.F."/>
            <person name="Ownbey T."/>
            <person name="Hartman K."/>
            <person name="Nydick C."/>
            <person name="Carson M.B."/>
            <person name="Vaughn J."/>
            <person name="Thomson C."/>
            <person name="Song L."/>
            <person name="Lin S."/>
            <person name="Yuan X."/>
            <person name="Najar F."/>
            <person name="Zhan M."/>
            <person name="Ren Q."/>
            <person name="Zhu H."/>
            <person name="Qi S."/>
            <person name="Kenton S.M."/>
            <person name="Lai H."/>
            <person name="White J.D."/>
            <person name="Clifton S."/>
            <person name="Roe B.A."/>
            <person name="Dyer D.W."/>
        </authorList>
    </citation>
    <scope>NUCLEOTIDE SEQUENCE [LARGE SCALE GENOMIC DNA]</scope>
    <source>
        <strain>ATCC 700825 / FA 1090</strain>
    </source>
</reference>
<dbReference type="EMBL" id="AE004969">
    <property type="protein sequence ID" value="AAW90069.1"/>
    <property type="molecule type" value="Genomic_DNA"/>
</dbReference>
<dbReference type="RefSeq" id="WP_002219692.1">
    <property type="nucleotide sequence ID" value="NC_002946.2"/>
</dbReference>
<dbReference type="RefSeq" id="YP_208481.1">
    <property type="nucleotide sequence ID" value="NC_002946.2"/>
</dbReference>
<dbReference type="SMR" id="Q5F6W8"/>
<dbReference type="STRING" id="242231.NGO_1426"/>
<dbReference type="GeneID" id="93386629"/>
<dbReference type="KEGG" id="ngo:NGO_1426"/>
<dbReference type="PATRIC" id="fig|242231.10.peg.1684"/>
<dbReference type="HOGENOM" id="CLU_069054_5_3_4"/>
<dbReference type="Proteomes" id="UP000000535">
    <property type="component" value="Chromosome"/>
</dbReference>
<dbReference type="GO" id="GO:0051537">
    <property type="term" value="F:2 iron, 2 sulfur cluster binding"/>
    <property type="evidence" value="ECO:0007669"/>
    <property type="project" value="UniProtKB-ARBA"/>
</dbReference>
<dbReference type="GO" id="GO:0051539">
    <property type="term" value="F:4 iron, 4 sulfur cluster binding"/>
    <property type="evidence" value="ECO:0007669"/>
    <property type="project" value="TreeGrafter"/>
</dbReference>
<dbReference type="GO" id="GO:0005506">
    <property type="term" value="F:iron ion binding"/>
    <property type="evidence" value="ECO:0007669"/>
    <property type="project" value="UniProtKB-UniRule"/>
</dbReference>
<dbReference type="GO" id="GO:0016226">
    <property type="term" value="P:iron-sulfur cluster assembly"/>
    <property type="evidence" value="ECO:0007669"/>
    <property type="project" value="UniProtKB-UniRule"/>
</dbReference>
<dbReference type="FunFam" id="2.60.300.12:FF:000002">
    <property type="entry name" value="Iron-sulfur cluster insertion protein ErpA"/>
    <property type="match status" value="1"/>
</dbReference>
<dbReference type="Gene3D" id="2.60.300.12">
    <property type="entry name" value="HesB-like domain"/>
    <property type="match status" value="1"/>
</dbReference>
<dbReference type="HAMAP" id="MF_01380">
    <property type="entry name" value="Fe_S_insert_ErpA"/>
    <property type="match status" value="1"/>
</dbReference>
<dbReference type="InterPro" id="IPR000361">
    <property type="entry name" value="FeS_biogenesis"/>
</dbReference>
<dbReference type="InterPro" id="IPR016092">
    <property type="entry name" value="FeS_cluster_insertion"/>
</dbReference>
<dbReference type="InterPro" id="IPR017870">
    <property type="entry name" value="FeS_cluster_insertion_CS"/>
</dbReference>
<dbReference type="InterPro" id="IPR023063">
    <property type="entry name" value="FeS_cluster_insertion_RrpA"/>
</dbReference>
<dbReference type="InterPro" id="IPR035903">
    <property type="entry name" value="HesB-like_dom_sf"/>
</dbReference>
<dbReference type="NCBIfam" id="TIGR00049">
    <property type="entry name" value="iron-sulfur cluster assembly accessory protein"/>
    <property type="match status" value="1"/>
</dbReference>
<dbReference type="NCBIfam" id="NF010147">
    <property type="entry name" value="PRK13623.1"/>
    <property type="match status" value="1"/>
</dbReference>
<dbReference type="PANTHER" id="PTHR43011">
    <property type="entry name" value="IRON-SULFUR CLUSTER ASSEMBLY 2 HOMOLOG, MITOCHONDRIAL"/>
    <property type="match status" value="1"/>
</dbReference>
<dbReference type="PANTHER" id="PTHR43011:SF1">
    <property type="entry name" value="IRON-SULFUR CLUSTER ASSEMBLY 2 HOMOLOG, MITOCHONDRIAL"/>
    <property type="match status" value="1"/>
</dbReference>
<dbReference type="Pfam" id="PF01521">
    <property type="entry name" value="Fe-S_biosyn"/>
    <property type="match status" value="1"/>
</dbReference>
<dbReference type="SUPFAM" id="SSF89360">
    <property type="entry name" value="HesB-like domain"/>
    <property type="match status" value="1"/>
</dbReference>
<dbReference type="PROSITE" id="PS01152">
    <property type="entry name" value="HESB"/>
    <property type="match status" value="1"/>
</dbReference>
<keyword id="KW-0408">Iron</keyword>
<keyword id="KW-0411">Iron-sulfur</keyword>
<keyword id="KW-0479">Metal-binding</keyword>
<keyword id="KW-1185">Reference proteome</keyword>
<feature type="chain" id="PRO_0000311507" description="Putative iron-sulfur cluster insertion protein ErpA">
    <location>
        <begin position="1"/>
        <end position="112"/>
    </location>
</feature>
<feature type="binding site" evidence="1">
    <location>
        <position position="40"/>
    </location>
    <ligand>
        <name>iron-sulfur cluster</name>
        <dbReference type="ChEBI" id="CHEBI:30408"/>
    </ligand>
</feature>
<feature type="binding site" evidence="1">
    <location>
        <position position="104"/>
    </location>
    <ligand>
        <name>iron-sulfur cluster</name>
        <dbReference type="ChEBI" id="CHEBI:30408"/>
    </ligand>
</feature>
<feature type="binding site" evidence="1">
    <location>
        <position position="106"/>
    </location>
    <ligand>
        <name>iron-sulfur cluster</name>
        <dbReference type="ChEBI" id="CHEBI:30408"/>
    </ligand>
</feature>
<evidence type="ECO:0000255" key="1">
    <source>
        <dbReference type="HAMAP-Rule" id="MF_01380"/>
    </source>
</evidence>
<gene>
    <name evidence="1" type="primary">erpA</name>
    <name type="ordered locus">NGO_1426</name>
</gene>